<accession>Q32AF9</accession>
<organism>
    <name type="scientific">Shigella dysenteriae serotype 1 (strain Sd197)</name>
    <dbReference type="NCBI Taxonomy" id="300267"/>
    <lineage>
        <taxon>Bacteria</taxon>
        <taxon>Pseudomonadati</taxon>
        <taxon>Pseudomonadota</taxon>
        <taxon>Gammaproteobacteria</taxon>
        <taxon>Enterobacterales</taxon>
        <taxon>Enterobacteriaceae</taxon>
        <taxon>Shigella</taxon>
    </lineage>
</organism>
<comment type="function">
    <text evidence="1">DNA-dependent RNA polymerase catalyzes the transcription of DNA into RNA using the four ribonucleoside triphosphates as substrates.</text>
</comment>
<comment type="catalytic activity">
    <reaction evidence="1">
        <text>RNA(n) + a ribonucleoside 5'-triphosphate = RNA(n+1) + diphosphate</text>
        <dbReference type="Rhea" id="RHEA:21248"/>
        <dbReference type="Rhea" id="RHEA-COMP:14527"/>
        <dbReference type="Rhea" id="RHEA-COMP:17342"/>
        <dbReference type="ChEBI" id="CHEBI:33019"/>
        <dbReference type="ChEBI" id="CHEBI:61557"/>
        <dbReference type="ChEBI" id="CHEBI:140395"/>
        <dbReference type="EC" id="2.7.7.6"/>
    </reaction>
</comment>
<comment type="subunit">
    <text evidence="1">The RNAP catalytic core consists of 2 alpha, 1 beta, 1 beta' and 1 omega subunit. When a sigma factor is associated with the core the holoenzyme is formed, which can initiate transcription.</text>
</comment>
<comment type="similarity">
    <text evidence="1">Belongs to the RNA polymerase beta chain family.</text>
</comment>
<name>RPOB_SHIDS</name>
<sequence>MVYSYTEKKRIRKDFGKRPQVLDVPYLLSIQLDSFQKFIEQDPEGQYGLEAAFRSVFPIQSYSGNSELQYVSYRLGEPVFDVQECQIRGVTYSAPLRVKLRLVIYEREAPEGTVKDIKEQEVYMGEIPLMTDNGTFVINGTERVIVSQLHRSPGVFFDSDKGKTHSSGKVLYNARIIPYRGSWLDFEFDPKDNLFVRIDRRRKLPATIILRALNYTTEQILDLFFEKVIFEIRDNKLQMELVPERLRGETASFDIEANGKVYVEKGRRITARHIRQLEKDDVKLIEVPVEYIAGKVVAKDYIDESTGELICAANMELSLELLAKLSQSGHKRIETLFTNDLDHGPYISETLRVDPTNDRLSALVEIYRMMRPGEPPTREAAESLFENLFFSEDRYDLSAVGRMKFNRSLLREEIEGSGILSKDDIIDVMKKLIDIRNGKGEVDDIDHLGNRRIRSVGEMAENQFRVGLVRVERAVKERLSLGDLDTLMPQDMINAKPISAAVKEFFGSSQLSQFMDQNNPLSEITHKRRISALGPGGLTRERAGFEVRDVHPTHYGRVCPIETPEGPNIGLINSLSVYAQTNEYGFLETPYRKVTDGVVTDEIHYLSAIEEGNYVIAQANSNLDEEGHFVEDLVTCRSKGESSLFSRDQVDYMDVSTQQVVSVGASLIPFLEHDDANRALMGANMQRQAVPTLRADKPLVGTGMERAVAVDSGVTAVAKRGGVVQYVDASRIVIKVNEDEMYPGEAGIDIYNLTKYTRSNQNTCINQMPCVSLGEPVERGDVLADGPSTDLGELALGQNMRVAFMPWNGYNFEDSILVSERVVQEDRFTTIHIQELACVSRDTKLGPEEITADIPNVGEAALSKLDESGIVYIGAEVTGGDILVGKVTPKGETQLTPEEKLLRAIFGEKASDVKDSSLRVPNGVSGTVIDVQVFTRDGVEKDKRALEIEEMQLKQAKKDLSEELQILEAGLFSRIRAVLVAGGVEAEKLDKLPRDRWLELGLTDEEKQNQLEQLAEQYDELKHEFEKKLEAKRRKITQGDDLAPGVLKIVKVYLAVKRRIQPGDKMAGRHGNKGVISKINPIEDMPYDENGTPVDIVLNPLGVPSRMNIGQILETHLGMAAKGIGDKINAMLKQQQEVAKLREFIQRAYDLGADVRQKVDLSTFSDEEVMRLAENLRKGMPIATPVFDGAKEAEIKELLKLGDLPTSGQIRLYDGRTGEQFERPVTVGYMYMLKLNHLVDDKMHARSTGSYSLVTQQPLGGKAQFGGQRFGEMEVWALEAYGAAYTLQEMLTVKSDDVNGRTKMYKNIVDGNHQMEPGMPESFNVLLKEIRSLGINIELEDE</sequence>
<keyword id="KW-0007">Acetylation</keyword>
<keyword id="KW-0240">DNA-directed RNA polymerase</keyword>
<keyword id="KW-0548">Nucleotidyltransferase</keyword>
<keyword id="KW-1185">Reference proteome</keyword>
<keyword id="KW-0804">Transcription</keyword>
<keyword id="KW-0808">Transferase</keyword>
<reference key="1">
    <citation type="journal article" date="2005" name="Nucleic Acids Res.">
        <title>Genome dynamics and diversity of Shigella species, the etiologic agents of bacillary dysentery.</title>
        <authorList>
            <person name="Yang F."/>
            <person name="Yang J."/>
            <person name="Zhang X."/>
            <person name="Chen L."/>
            <person name="Jiang Y."/>
            <person name="Yan Y."/>
            <person name="Tang X."/>
            <person name="Wang J."/>
            <person name="Xiong Z."/>
            <person name="Dong J."/>
            <person name="Xue Y."/>
            <person name="Zhu Y."/>
            <person name="Xu X."/>
            <person name="Sun L."/>
            <person name="Chen S."/>
            <person name="Nie H."/>
            <person name="Peng J."/>
            <person name="Xu J."/>
            <person name="Wang Y."/>
            <person name="Yuan Z."/>
            <person name="Wen Y."/>
            <person name="Yao Z."/>
            <person name="Shen Y."/>
            <person name="Qiang B."/>
            <person name="Hou Y."/>
            <person name="Yu J."/>
            <person name="Jin Q."/>
        </authorList>
    </citation>
    <scope>NUCLEOTIDE SEQUENCE [LARGE SCALE GENOMIC DNA]</scope>
    <source>
        <strain>Sd197</strain>
    </source>
</reference>
<dbReference type="EC" id="2.7.7.6" evidence="1"/>
<dbReference type="EMBL" id="CP000034">
    <property type="protein sequence ID" value="ABB63696.1"/>
    <property type="molecule type" value="Genomic_DNA"/>
</dbReference>
<dbReference type="RefSeq" id="WP_005015893.1">
    <property type="nucleotide sequence ID" value="NC_007606.1"/>
</dbReference>
<dbReference type="RefSeq" id="YP_405187.1">
    <property type="nucleotide sequence ID" value="NC_007606.1"/>
</dbReference>
<dbReference type="SMR" id="Q32AF9"/>
<dbReference type="STRING" id="300267.SDY_3741"/>
<dbReference type="EnsemblBacteria" id="ABB63696">
    <property type="protein sequence ID" value="ABB63696"/>
    <property type="gene ID" value="SDY_3741"/>
</dbReference>
<dbReference type="KEGG" id="sdy:SDY_3741"/>
<dbReference type="PATRIC" id="fig|300267.13.peg.4436"/>
<dbReference type="HOGENOM" id="CLU_000524_4_3_6"/>
<dbReference type="Proteomes" id="UP000002716">
    <property type="component" value="Chromosome"/>
</dbReference>
<dbReference type="GO" id="GO:0000428">
    <property type="term" value="C:DNA-directed RNA polymerase complex"/>
    <property type="evidence" value="ECO:0007669"/>
    <property type="project" value="UniProtKB-KW"/>
</dbReference>
<dbReference type="GO" id="GO:0003677">
    <property type="term" value="F:DNA binding"/>
    <property type="evidence" value="ECO:0007669"/>
    <property type="project" value="UniProtKB-UniRule"/>
</dbReference>
<dbReference type="GO" id="GO:0003899">
    <property type="term" value="F:DNA-directed RNA polymerase activity"/>
    <property type="evidence" value="ECO:0007669"/>
    <property type="project" value="UniProtKB-UniRule"/>
</dbReference>
<dbReference type="GO" id="GO:0032549">
    <property type="term" value="F:ribonucleoside binding"/>
    <property type="evidence" value="ECO:0007669"/>
    <property type="project" value="InterPro"/>
</dbReference>
<dbReference type="GO" id="GO:0006351">
    <property type="term" value="P:DNA-templated transcription"/>
    <property type="evidence" value="ECO:0007669"/>
    <property type="project" value="UniProtKB-UniRule"/>
</dbReference>
<dbReference type="CDD" id="cd00653">
    <property type="entry name" value="RNA_pol_B_RPB2"/>
    <property type="match status" value="1"/>
</dbReference>
<dbReference type="FunFam" id="2.30.150.10:FF:000001">
    <property type="entry name" value="DNA-directed RNA polymerase subunit beta"/>
    <property type="match status" value="1"/>
</dbReference>
<dbReference type="FunFam" id="2.40.270.10:FF:000003">
    <property type="entry name" value="DNA-directed RNA polymerase subunit beta"/>
    <property type="match status" value="1"/>
</dbReference>
<dbReference type="FunFam" id="2.40.270.10:FF:000004">
    <property type="entry name" value="DNA-directed RNA polymerase subunit beta"/>
    <property type="match status" value="1"/>
</dbReference>
<dbReference type="FunFam" id="2.40.50.100:FF:000006">
    <property type="entry name" value="DNA-directed RNA polymerase subunit beta"/>
    <property type="match status" value="1"/>
</dbReference>
<dbReference type="FunFam" id="2.40.50.150:FF:000001">
    <property type="entry name" value="DNA-directed RNA polymerase subunit beta"/>
    <property type="match status" value="1"/>
</dbReference>
<dbReference type="FunFam" id="3.90.1100.10:FF:000002">
    <property type="entry name" value="DNA-directed RNA polymerase subunit beta"/>
    <property type="match status" value="1"/>
</dbReference>
<dbReference type="FunFam" id="3.90.1110.10:FF:000001">
    <property type="entry name" value="DNA-directed RNA polymerase subunit beta"/>
    <property type="match status" value="1"/>
</dbReference>
<dbReference type="FunFam" id="3.90.1110.10:FF:000004">
    <property type="entry name" value="DNA-directed RNA polymerase subunit beta"/>
    <property type="match status" value="1"/>
</dbReference>
<dbReference type="FunFam" id="3.90.1800.10:FF:000001">
    <property type="entry name" value="DNA-directed RNA polymerase subunit beta"/>
    <property type="match status" value="1"/>
</dbReference>
<dbReference type="Gene3D" id="2.40.50.100">
    <property type="match status" value="1"/>
</dbReference>
<dbReference type="Gene3D" id="2.40.50.150">
    <property type="match status" value="1"/>
</dbReference>
<dbReference type="Gene3D" id="3.90.1100.10">
    <property type="match status" value="2"/>
</dbReference>
<dbReference type="Gene3D" id="6.10.140.1670">
    <property type="match status" value="1"/>
</dbReference>
<dbReference type="Gene3D" id="2.30.150.10">
    <property type="entry name" value="DNA-directed RNA polymerase, beta subunit, external 1 domain"/>
    <property type="match status" value="1"/>
</dbReference>
<dbReference type="Gene3D" id="2.40.270.10">
    <property type="entry name" value="DNA-directed RNA polymerase, subunit 2, domain 6"/>
    <property type="match status" value="1"/>
</dbReference>
<dbReference type="Gene3D" id="3.90.1800.10">
    <property type="entry name" value="RNA polymerase alpha subunit dimerisation domain"/>
    <property type="match status" value="1"/>
</dbReference>
<dbReference type="Gene3D" id="3.90.1110.10">
    <property type="entry name" value="RNA polymerase Rpb2, domain 2"/>
    <property type="match status" value="1"/>
</dbReference>
<dbReference type="HAMAP" id="MF_01321">
    <property type="entry name" value="RNApol_bact_RpoB"/>
    <property type="match status" value="1"/>
</dbReference>
<dbReference type="InterPro" id="IPR042107">
    <property type="entry name" value="DNA-dir_RNA_pol_bsu_ext_1_sf"/>
</dbReference>
<dbReference type="InterPro" id="IPR019462">
    <property type="entry name" value="DNA-dir_RNA_pol_bsu_external_1"/>
</dbReference>
<dbReference type="InterPro" id="IPR015712">
    <property type="entry name" value="DNA-dir_RNA_pol_su2"/>
</dbReference>
<dbReference type="InterPro" id="IPR007120">
    <property type="entry name" value="DNA-dir_RNAP_su2_dom"/>
</dbReference>
<dbReference type="InterPro" id="IPR037033">
    <property type="entry name" value="DNA-dir_RNAP_su2_hyb_sf"/>
</dbReference>
<dbReference type="InterPro" id="IPR010243">
    <property type="entry name" value="RNA_pol_bsu_bac"/>
</dbReference>
<dbReference type="InterPro" id="IPR007121">
    <property type="entry name" value="RNA_pol_bsu_CS"/>
</dbReference>
<dbReference type="InterPro" id="IPR007644">
    <property type="entry name" value="RNA_pol_bsu_protrusion"/>
</dbReference>
<dbReference type="InterPro" id="IPR007642">
    <property type="entry name" value="RNA_pol_Rpb2_2"/>
</dbReference>
<dbReference type="InterPro" id="IPR037034">
    <property type="entry name" value="RNA_pol_Rpb2_2_sf"/>
</dbReference>
<dbReference type="InterPro" id="IPR007645">
    <property type="entry name" value="RNA_pol_Rpb2_3"/>
</dbReference>
<dbReference type="InterPro" id="IPR007641">
    <property type="entry name" value="RNA_pol_Rpb2_7"/>
</dbReference>
<dbReference type="InterPro" id="IPR014724">
    <property type="entry name" value="RNA_pol_RPB2_OB-fold"/>
</dbReference>
<dbReference type="NCBIfam" id="NF001616">
    <property type="entry name" value="PRK00405.1"/>
    <property type="match status" value="1"/>
</dbReference>
<dbReference type="NCBIfam" id="TIGR02013">
    <property type="entry name" value="rpoB"/>
    <property type="match status" value="1"/>
</dbReference>
<dbReference type="PANTHER" id="PTHR20856">
    <property type="entry name" value="DNA-DIRECTED RNA POLYMERASE I SUBUNIT 2"/>
    <property type="match status" value="1"/>
</dbReference>
<dbReference type="Pfam" id="PF04563">
    <property type="entry name" value="RNA_pol_Rpb2_1"/>
    <property type="match status" value="1"/>
</dbReference>
<dbReference type="Pfam" id="PF04561">
    <property type="entry name" value="RNA_pol_Rpb2_2"/>
    <property type="match status" value="2"/>
</dbReference>
<dbReference type="Pfam" id="PF04565">
    <property type="entry name" value="RNA_pol_Rpb2_3"/>
    <property type="match status" value="1"/>
</dbReference>
<dbReference type="Pfam" id="PF10385">
    <property type="entry name" value="RNA_pol_Rpb2_45"/>
    <property type="match status" value="1"/>
</dbReference>
<dbReference type="Pfam" id="PF00562">
    <property type="entry name" value="RNA_pol_Rpb2_6"/>
    <property type="match status" value="1"/>
</dbReference>
<dbReference type="Pfam" id="PF04560">
    <property type="entry name" value="RNA_pol_Rpb2_7"/>
    <property type="match status" value="1"/>
</dbReference>
<dbReference type="SUPFAM" id="SSF64484">
    <property type="entry name" value="beta and beta-prime subunits of DNA dependent RNA-polymerase"/>
    <property type="match status" value="1"/>
</dbReference>
<dbReference type="PROSITE" id="PS01166">
    <property type="entry name" value="RNA_POL_BETA"/>
    <property type="match status" value="1"/>
</dbReference>
<gene>
    <name evidence="1" type="primary">rpoB</name>
    <name type="ordered locus">SDY_3741</name>
</gene>
<protein>
    <recommendedName>
        <fullName evidence="1">DNA-directed RNA polymerase subunit beta</fullName>
        <shortName evidence="1">RNAP subunit beta</shortName>
        <ecNumber evidence="1">2.7.7.6</ecNumber>
    </recommendedName>
    <alternativeName>
        <fullName evidence="1">RNA polymerase subunit beta</fullName>
    </alternativeName>
    <alternativeName>
        <fullName evidence="1">Transcriptase subunit beta</fullName>
    </alternativeName>
</protein>
<evidence type="ECO:0000255" key="1">
    <source>
        <dbReference type="HAMAP-Rule" id="MF_01321"/>
    </source>
</evidence>
<feature type="chain" id="PRO_0000224106" description="DNA-directed RNA polymerase subunit beta">
    <location>
        <begin position="1"/>
        <end position="1342"/>
    </location>
</feature>
<feature type="modified residue" description="N6-acetyllysine" evidence="1">
    <location>
        <position position="1022"/>
    </location>
</feature>
<feature type="modified residue" description="N6-acetyllysine" evidence="1">
    <location>
        <position position="1200"/>
    </location>
</feature>
<proteinExistence type="inferred from homology"/>